<protein>
    <recommendedName>
        <fullName evidence="1">UPF0434 protein BMEII0403</fullName>
    </recommendedName>
</protein>
<reference key="1">
    <citation type="journal article" date="2002" name="Proc. Natl. Acad. Sci. U.S.A.">
        <title>The genome sequence of the facultative intracellular pathogen Brucella melitensis.</title>
        <authorList>
            <person name="DelVecchio V.G."/>
            <person name="Kapatral V."/>
            <person name="Redkar R.J."/>
            <person name="Patra G."/>
            <person name="Mujer C."/>
            <person name="Los T."/>
            <person name="Ivanova N."/>
            <person name="Anderson I."/>
            <person name="Bhattacharyya A."/>
            <person name="Lykidis A."/>
            <person name="Reznik G."/>
            <person name="Jablonski L."/>
            <person name="Larsen N."/>
            <person name="D'Souza M."/>
            <person name="Bernal A."/>
            <person name="Mazur M."/>
            <person name="Goltsman E."/>
            <person name="Selkov E."/>
            <person name="Elzer P.H."/>
            <person name="Hagius S."/>
            <person name="O'Callaghan D."/>
            <person name="Letesson J.-J."/>
            <person name="Haselkorn R."/>
            <person name="Kyrpides N.C."/>
            <person name="Overbeek R."/>
        </authorList>
    </citation>
    <scope>NUCLEOTIDE SEQUENCE [LARGE SCALE GENOMIC DNA]</scope>
    <source>
        <strain>ATCC 23456 / CCUG 17765 / NCTC 10094 / 16M</strain>
    </source>
</reference>
<evidence type="ECO:0000255" key="1">
    <source>
        <dbReference type="HAMAP-Rule" id="MF_01187"/>
    </source>
</evidence>
<dbReference type="EMBL" id="AE008918">
    <property type="protein sequence ID" value="AAL53645.1"/>
    <property type="molecule type" value="Genomic_DNA"/>
</dbReference>
<dbReference type="PIR" id="AB3560">
    <property type="entry name" value="AB3560"/>
</dbReference>
<dbReference type="RefSeq" id="WP_002965755.1">
    <property type="nucleotide sequence ID" value="NZ_GG703779.1"/>
</dbReference>
<dbReference type="SMR" id="Q8YCX5"/>
<dbReference type="KEGG" id="bme:BMEII0403"/>
<dbReference type="eggNOG" id="COG2835">
    <property type="taxonomic scope" value="Bacteria"/>
</dbReference>
<dbReference type="Proteomes" id="UP000000419">
    <property type="component" value="Chromosome II"/>
</dbReference>
<dbReference type="GO" id="GO:0005829">
    <property type="term" value="C:cytosol"/>
    <property type="evidence" value="ECO:0007669"/>
    <property type="project" value="TreeGrafter"/>
</dbReference>
<dbReference type="FunFam" id="2.20.25.10:FF:000002">
    <property type="entry name" value="UPF0434 protein YcaR"/>
    <property type="match status" value="1"/>
</dbReference>
<dbReference type="Gene3D" id="2.20.25.10">
    <property type="match status" value="1"/>
</dbReference>
<dbReference type="HAMAP" id="MF_01187">
    <property type="entry name" value="UPF0434"/>
    <property type="match status" value="1"/>
</dbReference>
<dbReference type="InterPro" id="IPR005651">
    <property type="entry name" value="Trm112-like"/>
</dbReference>
<dbReference type="PANTHER" id="PTHR33505:SF4">
    <property type="entry name" value="PROTEIN PREY, MITOCHONDRIAL"/>
    <property type="match status" value="1"/>
</dbReference>
<dbReference type="PANTHER" id="PTHR33505">
    <property type="entry name" value="ZGC:162634"/>
    <property type="match status" value="1"/>
</dbReference>
<dbReference type="Pfam" id="PF03966">
    <property type="entry name" value="Trm112p"/>
    <property type="match status" value="1"/>
</dbReference>
<dbReference type="SUPFAM" id="SSF158997">
    <property type="entry name" value="Trm112p-like"/>
    <property type="match status" value="1"/>
</dbReference>
<organism>
    <name type="scientific">Brucella melitensis biotype 1 (strain ATCC 23456 / CCUG 17765 / NCTC 10094 / 16M)</name>
    <dbReference type="NCBI Taxonomy" id="224914"/>
    <lineage>
        <taxon>Bacteria</taxon>
        <taxon>Pseudomonadati</taxon>
        <taxon>Pseudomonadota</taxon>
        <taxon>Alphaproteobacteria</taxon>
        <taxon>Hyphomicrobiales</taxon>
        <taxon>Brucellaceae</taxon>
        <taxon>Brucella/Ochrobactrum group</taxon>
        <taxon>Brucella</taxon>
    </lineage>
</organism>
<proteinExistence type="inferred from homology"/>
<feature type="chain" id="PRO_0000291069" description="UPF0434 protein BMEII0403">
    <location>
        <begin position="1"/>
        <end position="64"/>
    </location>
</feature>
<sequence length="64" mass="7126">MDDKVETGNIDVRLLELLVCPLTKGPLEYDAERSELVSRKARLAYPVRGGIPIMLPSEARSLTE</sequence>
<name>Y3403_BRUME</name>
<comment type="similarity">
    <text evidence="1">Belongs to the UPF0434 family.</text>
</comment>
<gene>
    <name type="ordered locus">BMEII0403</name>
</gene>
<accession>Q8YCX5</accession>